<organism>
    <name type="scientific">Acinetobacter baumannii (strain SDF)</name>
    <dbReference type="NCBI Taxonomy" id="509170"/>
    <lineage>
        <taxon>Bacteria</taxon>
        <taxon>Pseudomonadati</taxon>
        <taxon>Pseudomonadota</taxon>
        <taxon>Gammaproteobacteria</taxon>
        <taxon>Moraxellales</taxon>
        <taxon>Moraxellaceae</taxon>
        <taxon>Acinetobacter</taxon>
        <taxon>Acinetobacter calcoaceticus/baumannii complex</taxon>
    </lineage>
</organism>
<name>RL13_ACIBS</name>
<gene>
    <name evidence="1" type="primary">rplM</name>
    <name type="ordered locus">ABSDF2863</name>
</gene>
<proteinExistence type="inferred from homology"/>
<evidence type="ECO:0000255" key="1">
    <source>
        <dbReference type="HAMAP-Rule" id="MF_01366"/>
    </source>
</evidence>
<evidence type="ECO:0000305" key="2"/>
<protein>
    <recommendedName>
        <fullName evidence="1">Large ribosomal subunit protein uL13</fullName>
    </recommendedName>
    <alternativeName>
        <fullName evidence="2">50S ribosomal protein L13</fullName>
    </alternativeName>
</protein>
<dbReference type="EMBL" id="CU468230">
    <property type="protein sequence ID" value="CAP02156.1"/>
    <property type="molecule type" value="Genomic_DNA"/>
</dbReference>
<dbReference type="SMR" id="B0VV43"/>
<dbReference type="KEGG" id="abm:ABSDF2863"/>
<dbReference type="HOGENOM" id="CLU_082184_2_2_6"/>
<dbReference type="Proteomes" id="UP000001741">
    <property type="component" value="Chromosome"/>
</dbReference>
<dbReference type="GO" id="GO:0022625">
    <property type="term" value="C:cytosolic large ribosomal subunit"/>
    <property type="evidence" value="ECO:0007669"/>
    <property type="project" value="TreeGrafter"/>
</dbReference>
<dbReference type="GO" id="GO:0003729">
    <property type="term" value="F:mRNA binding"/>
    <property type="evidence" value="ECO:0007669"/>
    <property type="project" value="TreeGrafter"/>
</dbReference>
<dbReference type="GO" id="GO:0003735">
    <property type="term" value="F:structural constituent of ribosome"/>
    <property type="evidence" value="ECO:0007669"/>
    <property type="project" value="InterPro"/>
</dbReference>
<dbReference type="GO" id="GO:0017148">
    <property type="term" value="P:negative regulation of translation"/>
    <property type="evidence" value="ECO:0007669"/>
    <property type="project" value="TreeGrafter"/>
</dbReference>
<dbReference type="GO" id="GO:0006412">
    <property type="term" value="P:translation"/>
    <property type="evidence" value="ECO:0007669"/>
    <property type="project" value="UniProtKB-UniRule"/>
</dbReference>
<dbReference type="CDD" id="cd00392">
    <property type="entry name" value="Ribosomal_L13"/>
    <property type="match status" value="1"/>
</dbReference>
<dbReference type="FunFam" id="3.90.1180.10:FF:000001">
    <property type="entry name" value="50S ribosomal protein L13"/>
    <property type="match status" value="1"/>
</dbReference>
<dbReference type="Gene3D" id="3.90.1180.10">
    <property type="entry name" value="Ribosomal protein L13"/>
    <property type="match status" value="1"/>
</dbReference>
<dbReference type="HAMAP" id="MF_01366">
    <property type="entry name" value="Ribosomal_uL13"/>
    <property type="match status" value="1"/>
</dbReference>
<dbReference type="InterPro" id="IPR005822">
    <property type="entry name" value="Ribosomal_uL13"/>
</dbReference>
<dbReference type="InterPro" id="IPR005823">
    <property type="entry name" value="Ribosomal_uL13_bac-type"/>
</dbReference>
<dbReference type="InterPro" id="IPR036899">
    <property type="entry name" value="Ribosomal_uL13_sf"/>
</dbReference>
<dbReference type="NCBIfam" id="TIGR01066">
    <property type="entry name" value="rplM_bact"/>
    <property type="match status" value="1"/>
</dbReference>
<dbReference type="PANTHER" id="PTHR11545:SF2">
    <property type="entry name" value="LARGE RIBOSOMAL SUBUNIT PROTEIN UL13M"/>
    <property type="match status" value="1"/>
</dbReference>
<dbReference type="PANTHER" id="PTHR11545">
    <property type="entry name" value="RIBOSOMAL PROTEIN L13"/>
    <property type="match status" value="1"/>
</dbReference>
<dbReference type="Pfam" id="PF00572">
    <property type="entry name" value="Ribosomal_L13"/>
    <property type="match status" value="1"/>
</dbReference>
<dbReference type="PIRSF" id="PIRSF002181">
    <property type="entry name" value="Ribosomal_L13"/>
    <property type="match status" value="1"/>
</dbReference>
<dbReference type="SUPFAM" id="SSF52161">
    <property type="entry name" value="Ribosomal protein L13"/>
    <property type="match status" value="1"/>
</dbReference>
<sequence length="142" mass="15952">MKTLSAKPAEVQHDWFVVDATGKTLGRLATEIARRLRGKHKTSYTPHVDTGDYIIVINAEQVQVTGNKALDKKYYRHTEFPGGLKETNFEKLVAHKPEEIFERAVKGMLPKGPLGYAMIKKMKVYAGSEHPHAAQQPQVLDI</sequence>
<reference key="1">
    <citation type="journal article" date="2008" name="PLoS ONE">
        <title>Comparative analysis of Acinetobacters: three genomes for three lifestyles.</title>
        <authorList>
            <person name="Vallenet D."/>
            <person name="Nordmann P."/>
            <person name="Barbe V."/>
            <person name="Poirel L."/>
            <person name="Mangenot S."/>
            <person name="Bataille E."/>
            <person name="Dossat C."/>
            <person name="Gas S."/>
            <person name="Kreimeyer A."/>
            <person name="Lenoble P."/>
            <person name="Oztas S."/>
            <person name="Poulain J."/>
            <person name="Segurens B."/>
            <person name="Robert C."/>
            <person name="Abergel C."/>
            <person name="Claverie J.-M."/>
            <person name="Raoult D."/>
            <person name="Medigue C."/>
            <person name="Weissenbach J."/>
            <person name="Cruveiller S."/>
        </authorList>
    </citation>
    <scope>NUCLEOTIDE SEQUENCE [LARGE SCALE GENOMIC DNA]</scope>
    <source>
        <strain>SDF</strain>
    </source>
</reference>
<accession>B0VV43</accession>
<keyword id="KW-0687">Ribonucleoprotein</keyword>
<keyword id="KW-0689">Ribosomal protein</keyword>
<comment type="function">
    <text evidence="1">This protein is one of the early assembly proteins of the 50S ribosomal subunit, although it is not seen to bind rRNA by itself. It is important during the early stages of 50S assembly.</text>
</comment>
<comment type="subunit">
    <text evidence="1">Part of the 50S ribosomal subunit.</text>
</comment>
<comment type="similarity">
    <text evidence="1">Belongs to the universal ribosomal protein uL13 family.</text>
</comment>
<feature type="chain" id="PRO_1000144078" description="Large ribosomal subunit protein uL13">
    <location>
        <begin position="1"/>
        <end position="142"/>
    </location>
</feature>